<keyword id="KW-0027">Amidation</keyword>
<keyword id="KW-0929">Antimicrobial</keyword>
<keyword id="KW-0204">Cytolysis</keyword>
<keyword id="KW-0903">Direct protein sequencing</keyword>
<keyword id="KW-0291">Formylation</keyword>
<keyword id="KW-0354">Hemolysis</keyword>
<keyword id="KW-0406">Ion transport</keyword>
<keyword id="KW-0472">Membrane</keyword>
<keyword id="KW-0626">Porin</keyword>
<keyword id="KW-0964">Secreted</keyword>
<keyword id="KW-1052">Target cell membrane</keyword>
<keyword id="KW-1053">Target membrane</keyword>
<keyword id="KW-0800">Toxin</keyword>
<keyword id="KW-0812">Transmembrane</keyword>
<keyword id="KW-0813">Transport</keyword>
<proteinExistence type="evidence at protein level"/>
<comment type="function">
    <text evidence="1">Main toxin of bee venom with strong hemolytic activity and antimicrobial activity. It has enhancing effects on bee venom phospholipase A2 activity. This amphipathic toxin binds to negatively charged membrane surface and forms pore by inserting into lipid bilayers inducing the leakage of ions and molecules and the enhancement of permeability that ultimately leads to cell lysis. It acts as a voltage-gated pore with higher selectivity for anions over cations. The ion conductance has been shown to be voltage-dependent. Self-association of melittin in membranes is promoted by high ionic strength, but not by the presence of negatively charged lipids. In vivo, intradermal injection into healthy human volunteers produce sharp pain sensation and an inflammatory response. It produces pain by activating primary nociceptor cells directly and indirectly due to its ability to activate plasma membrane phospholipase A2 and its pore-forming activity.</text>
</comment>
<comment type="subunit">
    <text evidence="1">Monomer (in solution and for integration into membranes), homotetramer (in solution and potentially as a toroidal pore in membranes), and potenially homomultimer (as a toroidal pore in membranes).</text>
</comment>
<comment type="subcellular location">
    <subcellularLocation>
        <location evidence="2">Secreted</location>
    </subcellularLocation>
    <subcellularLocation>
        <location evidence="1">Target cell membrane</location>
    </subcellularLocation>
    <text evidence="1">Alpha-helical peptides form toroidal pores in the prey.</text>
</comment>
<comment type="tissue specificity">
    <text evidence="5">Expressed by the venom gland.</text>
</comment>
<comment type="similarity">
    <text evidence="4">Belongs to the melittin family.</text>
</comment>
<comment type="online information" name="Protein Spotlight">
    <link uri="https://www.proteinspotlight.org/back_issues/012"/>
    <text>Why Pooh luvvs hunny - Issue 12 of July 2001</text>
</comment>
<feature type="peptide" id="PRO_0000044531" description="Melittin" evidence="2">
    <location>
        <begin position="1"/>
        <end position="26"/>
    </location>
</feature>
<feature type="site" description="Important for the flexibility at the center of the helix, flexibility that is important for the stability of the voltage-gated pore" evidence="1">
    <location>
        <position position="14"/>
    </location>
</feature>
<feature type="modified residue" description="N-formylglycine; partial" evidence="1">
    <location>
        <position position="1"/>
    </location>
</feature>
<feature type="modified residue" description="Glutamic acid 1-amide" evidence="2">
    <location>
        <position position="26"/>
    </location>
</feature>
<organism>
    <name type="scientific">Apis dorsata</name>
    <name type="common">Giant honeybee</name>
    <dbReference type="NCBI Taxonomy" id="7462"/>
    <lineage>
        <taxon>Eukaryota</taxon>
        <taxon>Metazoa</taxon>
        <taxon>Ecdysozoa</taxon>
        <taxon>Arthropoda</taxon>
        <taxon>Hexapoda</taxon>
        <taxon>Insecta</taxon>
        <taxon>Pterygota</taxon>
        <taxon>Neoptera</taxon>
        <taxon>Endopterygota</taxon>
        <taxon>Hymenoptera</taxon>
        <taxon>Apocrita</taxon>
        <taxon>Aculeata</taxon>
        <taxon>Apoidea</taxon>
        <taxon>Anthophila</taxon>
        <taxon>Apidae</taxon>
        <taxon>Apis</taxon>
    </lineage>
</organism>
<protein>
    <recommendedName>
        <fullName evidence="3">Melittin</fullName>
        <shortName>MEL</shortName>
        <shortName>MLT</shortName>
    </recommendedName>
</protein>
<name>MEL_APIDO</name>
<dbReference type="PIR" id="A01763">
    <property type="entry name" value="MEHBCD"/>
</dbReference>
<dbReference type="SMR" id="P01502"/>
<dbReference type="GO" id="GO:0005576">
    <property type="term" value="C:extracellular region"/>
    <property type="evidence" value="ECO:0007669"/>
    <property type="project" value="UniProtKB-SubCell"/>
</dbReference>
<dbReference type="GO" id="GO:0044218">
    <property type="term" value="C:other organism cell membrane"/>
    <property type="evidence" value="ECO:0007669"/>
    <property type="project" value="UniProtKB-KW"/>
</dbReference>
<dbReference type="GO" id="GO:0046930">
    <property type="term" value="C:pore complex"/>
    <property type="evidence" value="ECO:0007669"/>
    <property type="project" value="UniProtKB-KW"/>
</dbReference>
<dbReference type="GO" id="GO:0015288">
    <property type="term" value="F:porin activity"/>
    <property type="evidence" value="ECO:0007669"/>
    <property type="project" value="UniProtKB-KW"/>
</dbReference>
<dbReference type="GO" id="GO:0004860">
    <property type="term" value="F:protein kinase inhibitor activity"/>
    <property type="evidence" value="ECO:0007669"/>
    <property type="project" value="InterPro"/>
</dbReference>
<dbReference type="GO" id="GO:0090729">
    <property type="term" value="F:toxin activity"/>
    <property type="evidence" value="ECO:0007669"/>
    <property type="project" value="UniProtKB-KW"/>
</dbReference>
<dbReference type="GO" id="GO:0031640">
    <property type="term" value="P:killing of cells of another organism"/>
    <property type="evidence" value="ECO:0007669"/>
    <property type="project" value="UniProtKB-KW"/>
</dbReference>
<dbReference type="GO" id="GO:0006811">
    <property type="term" value="P:monoatomic ion transport"/>
    <property type="evidence" value="ECO:0007669"/>
    <property type="project" value="UniProtKB-KW"/>
</dbReference>
<dbReference type="InterPro" id="IPR002116">
    <property type="entry name" value="Melittin/Api_allergen"/>
</dbReference>
<dbReference type="Pfam" id="PF01372">
    <property type="entry name" value="Melittin"/>
    <property type="match status" value="1"/>
</dbReference>
<gene>
    <name type="primary">MELT</name>
</gene>
<accession>P01502</accession>
<evidence type="ECO:0000250" key="1">
    <source>
        <dbReference type="UniProtKB" id="P01501"/>
    </source>
</evidence>
<evidence type="ECO:0000269" key="2">
    <source>
    </source>
</evidence>
<evidence type="ECO:0000303" key="3">
    <source>
    </source>
</evidence>
<evidence type="ECO:0000305" key="4"/>
<evidence type="ECO:0000305" key="5">
    <source>
    </source>
</evidence>
<reference key="1">
    <citation type="journal article" date="1975" name="FEBS Lett.">
        <title>The structure of Apis dorsata melittin: phylogenetic relationships between honeybees as deduced from sequence data.</title>
        <authorList>
            <person name="Kreil G."/>
        </authorList>
    </citation>
    <scope>PROTEIN SEQUENCE</scope>
    <scope>AMIDATION AT GLU-26</scope>
    <scope>SUBCELLULAR LOCATION</scope>
</reference>
<sequence>GIGAILKVLSTGLPALISWIKRKRQE</sequence>